<dbReference type="EC" id="2.1.3.15" evidence="1"/>
<dbReference type="EMBL" id="CP000076">
    <property type="protein sequence ID" value="AAY91352.1"/>
    <property type="molecule type" value="Genomic_DNA"/>
</dbReference>
<dbReference type="RefSeq" id="WP_011060384.1">
    <property type="nucleotide sequence ID" value="NC_004129.6"/>
</dbReference>
<dbReference type="SMR" id="Q4KEZ8"/>
<dbReference type="STRING" id="220664.PFL_2073"/>
<dbReference type="KEGG" id="pfl:PFL_2073"/>
<dbReference type="PATRIC" id="fig|220664.5.peg.2105"/>
<dbReference type="eggNOG" id="COG0777">
    <property type="taxonomic scope" value="Bacteria"/>
</dbReference>
<dbReference type="HOGENOM" id="CLU_015486_1_0_6"/>
<dbReference type="UniPathway" id="UPA00655">
    <property type="reaction ID" value="UER00711"/>
</dbReference>
<dbReference type="Proteomes" id="UP000008540">
    <property type="component" value="Chromosome"/>
</dbReference>
<dbReference type="GO" id="GO:0009329">
    <property type="term" value="C:acetate CoA-transferase complex"/>
    <property type="evidence" value="ECO:0007669"/>
    <property type="project" value="TreeGrafter"/>
</dbReference>
<dbReference type="GO" id="GO:0003989">
    <property type="term" value="F:acetyl-CoA carboxylase activity"/>
    <property type="evidence" value="ECO:0007669"/>
    <property type="project" value="InterPro"/>
</dbReference>
<dbReference type="GO" id="GO:0005524">
    <property type="term" value="F:ATP binding"/>
    <property type="evidence" value="ECO:0007669"/>
    <property type="project" value="UniProtKB-KW"/>
</dbReference>
<dbReference type="GO" id="GO:0016743">
    <property type="term" value="F:carboxyl- or carbamoyltransferase activity"/>
    <property type="evidence" value="ECO:0007669"/>
    <property type="project" value="UniProtKB-UniRule"/>
</dbReference>
<dbReference type="GO" id="GO:0008270">
    <property type="term" value="F:zinc ion binding"/>
    <property type="evidence" value="ECO:0007669"/>
    <property type="project" value="UniProtKB-UniRule"/>
</dbReference>
<dbReference type="GO" id="GO:0006633">
    <property type="term" value="P:fatty acid biosynthetic process"/>
    <property type="evidence" value="ECO:0007669"/>
    <property type="project" value="UniProtKB-KW"/>
</dbReference>
<dbReference type="GO" id="GO:2001295">
    <property type="term" value="P:malonyl-CoA biosynthetic process"/>
    <property type="evidence" value="ECO:0007669"/>
    <property type="project" value="UniProtKB-UniRule"/>
</dbReference>
<dbReference type="Gene3D" id="3.90.226.10">
    <property type="entry name" value="2-enoyl-CoA Hydratase, Chain A, domain 1"/>
    <property type="match status" value="1"/>
</dbReference>
<dbReference type="HAMAP" id="MF_01395">
    <property type="entry name" value="AcetylCoA_CT_beta"/>
    <property type="match status" value="1"/>
</dbReference>
<dbReference type="InterPro" id="IPR034733">
    <property type="entry name" value="AcCoA_carboxyl_beta"/>
</dbReference>
<dbReference type="InterPro" id="IPR000438">
    <property type="entry name" value="Acetyl_CoA_COase_Trfase_b_su"/>
</dbReference>
<dbReference type="InterPro" id="IPR029045">
    <property type="entry name" value="ClpP/crotonase-like_dom_sf"/>
</dbReference>
<dbReference type="InterPro" id="IPR011762">
    <property type="entry name" value="COA_CT_N"/>
</dbReference>
<dbReference type="InterPro" id="IPR041010">
    <property type="entry name" value="Znf-ACC"/>
</dbReference>
<dbReference type="NCBIfam" id="TIGR00515">
    <property type="entry name" value="accD"/>
    <property type="match status" value="1"/>
</dbReference>
<dbReference type="PANTHER" id="PTHR42995">
    <property type="entry name" value="ACETYL-COENZYME A CARBOXYLASE CARBOXYL TRANSFERASE SUBUNIT BETA, CHLOROPLASTIC"/>
    <property type="match status" value="1"/>
</dbReference>
<dbReference type="PANTHER" id="PTHR42995:SF5">
    <property type="entry name" value="ACETYL-COENZYME A CARBOXYLASE CARBOXYL TRANSFERASE SUBUNIT BETA, CHLOROPLASTIC"/>
    <property type="match status" value="1"/>
</dbReference>
<dbReference type="Pfam" id="PF01039">
    <property type="entry name" value="Carboxyl_trans"/>
    <property type="match status" value="1"/>
</dbReference>
<dbReference type="Pfam" id="PF17848">
    <property type="entry name" value="Zn_ribbon_ACC"/>
    <property type="match status" value="1"/>
</dbReference>
<dbReference type="PRINTS" id="PR01070">
    <property type="entry name" value="ACCCTRFRASEB"/>
</dbReference>
<dbReference type="SUPFAM" id="SSF52096">
    <property type="entry name" value="ClpP/crotonase"/>
    <property type="match status" value="1"/>
</dbReference>
<dbReference type="PROSITE" id="PS50980">
    <property type="entry name" value="COA_CT_NTER"/>
    <property type="match status" value="1"/>
</dbReference>
<organism>
    <name type="scientific">Pseudomonas fluorescens (strain ATCC BAA-477 / NRRL B-23932 / Pf-5)</name>
    <dbReference type="NCBI Taxonomy" id="220664"/>
    <lineage>
        <taxon>Bacteria</taxon>
        <taxon>Pseudomonadati</taxon>
        <taxon>Pseudomonadota</taxon>
        <taxon>Gammaproteobacteria</taxon>
        <taxon>Pseudomonadales</taxon>
        <taxon>Pseudomonadaceae</taxon>
        <taxon>Pseudomonas</taxon>
    </lineage>
</organism>
<evidence type="ECO:0000255" key="1">
    <source>
        <dbReference type="HAMAP-Rule" id="MF_01395"/>
    </source>
</evidence>
<evidence type="ECO:0000255" key="2">
    <source>
        <dbReference type="PROSITE-ProRule" id="PRU01136"/>
    </source>
</evidence>
<name>ACCD_PSEF5</name>
<feature type="chain" id="PRO_0000359037" description="Acetyl-coenzyme A carboxylase carboxyl transferase subunit beta">
    <location>
        <begin position="1"/>
        <end position="306"/>
    </location>
</feature>
<feature type="domain" description="CoA carboxyltransferase N-terminal" evidence="2">
    <location>
        <begin position="27"/>
        <end position="296"/>
    </location>
</feature>
<feature type="zinc finger region" description="C4-type" evidence="1">
    <location>
        <begin position="31"/>
        <end position="53"/>
    </location>
</feature>
<feature type="binding site" evidence="1">
    <location>
        <position position="31"/>
    </location>
    <ligand>
        <name>Zn(2+)</name>
        <dbReference type="ChEBI" id="CHEBI:29105"/>
    </ligand>
</feature>
<feature type="binding site" evidence="1">
    <location>
        <position position="34"/>
    </location>
    <ligand>
        <name>Zn(2+)</name>
        <dbReference type="ChEBI" id="CHEBI:29105"/>
    </ligand>
</feature>
<feature type="binding site" evidence="1">
    <location>
        <position position="50"/>
    </location>
    <ligand>
        <name>Zn(2+)</name>
        <dbReference type="ChEBI" id="CHEBI:29105"/>
    </ligand>
</feature>
<feature type="binding site" evidence="1">
    <location>
        <position position="53"/>
    </location>
    <ligand>
        <name>Zn(2+)</name>
        <dbReference type="ChEBI" id="CHEBI:29105"/>
    </ligand>
</feature>
<gene>
    <name evidence="1" type="primary">accD</name>
    <name type="ordered locus">PFL_2073</name>
</gene>
<proteinExistence type="inferred from homology"/>
<protein>
    <recommendedName>
        <fullName evidence="1">Acetyl-coenzyme A carboxylase carboxyl transferase subunit beta</fullName>
        <shortName evidence="1">ACCase subunit beta</shortName>
        <shortName evidence="1">Acetyl-CoA carboxylase carboxyltransferase subunit beta</shortName>
        <ecNumber evidence="1">2.1.3.15</ecNumber>
    </recommendedName>
</protein>
<reference key="1">
    <citation type="journal article" date="2005" name="Nat. Biotechnol.">
        <title>Complete genome sequence of the plant commensal Pseudomonas fluorescens Pf-5.</title>
        <authorList>
            <person name="Paulsen I.T."/>
            <person name="Press C.M."/>
            <person name="Ravel J."/>
            <person name="Kobayashi D.Y."/>
            <person name="Myers G.S.A."/>
            <person name="Mavrodi D.V."/>
            <person name="DeBoy R.T."/>
            <person name="Seshadri R."/>
            <person name="Ren Q."/>
            <person name="Madupu R."/>
            <person name="Dodson R.J."/>
            <person name="Durkin A.S."/>
            <person name="Brinkac L.M."/>
            <person name="Daugherty S.C."/>
            <person name="Sullivan S.A."/>
            <person name="Rosovitz M.J."/>
            <person name="Gwinn M.L."/>
            <person name="Zhou L."/>
            <person name="Schneider D.J."/>
            <person name="Cartinhour S.W."/>
            <person name="Nelson W.C."/>
            <person name="Weidman J."/>
            <person name="Watkins K."/>
            <person name="Tran K."/>
            <person name="Khouri H."/>
            <person name="Pierson E.A."/>
            <person name="Pierson L.S. III"/>
            <person name="Thomashow L.S."/>
            <person name="Loper J.E."/>
        </authorList>
    </citation>
    <scope>NUCLEOTIDE SEQUENCE [LARGE SCALE GENOMIC DNA]</scope>
    <source>
        <strain>ATCC BAA-477 / NRRL B-23932 / Pf-5</strain>
    </source>
</reference>
<comment type="function">
    <text evidence="1">Component of the acetyl coenzyme A carboxylase (ACC) complex. Biotin carboxylase (BC) catalyzes the carboxylation of biotin on its carrier protein (BCCP) and then the CO(2) group is transferred by the transcarboxylase to acetyl-CoA to form malonyl-CoA.</text>
</comment>
<comment type="catalytic activity">
    <reaction evidence="1">
        <text>N(6)-carboxybiotinyl-L-lysyl-[protein] + acetyl-CoA = N(6)-biotinyl-L-lysyl-[protein] + malonyl-CoA</text>
        <dbReference type="Rhea" id="RHEA:54728"/>
        <dbReference type="Rhea" id="RHEA-COMP:10505"/>
        <dbReference type="Rhea" id="RHEA-COMP:10506"/>
        <dbReference type="ChEBI" id="CHEBI:57288"/>
        <dbReference type="ChEBI" id="CHEBI:57384"/>
        <dbReference type="ChEBI" id="CHEBI:83144"/>
        <dbReference type="ChEBI" id="CHEBI:83145"/>
        <dbReference type="EC" id="2.1.3.15"/>
    </reaction>
</comment>
<comment type="cofactor">
    <cofactor evidence="1">
        <name>Zn(2+)</name>
        <dbReference type="ChEBI" id="CHEBI:29105"/>
    </cofactor>
    <text evidence="1">Binds 1 zinc ion per subunit.</text>
</comment>
<comment type="pathway">
    <text evidence="1">Lipid metabolism; malonyl-CoA biosynthesis; malonyl-CoA from acetyl-CoA: step 1/1.</text>
</comment>
<comment type="subunit">
    <text evidence="1">Acetyl-CoA carboxylase is a heterohexamer composed of biotin carboxyl carrier protein (AccB), biotin carboxylase (AccC) and two subunits each of ACCase subunit alpha (AccA) and ACCase subunit beta (AccD).</text>
</comment>
<comment type="subcellular location">
    <subcellularLocation>
        <location evidence="1">Cytoplasm</location>
    </subcellularLocation>
</comment>
<comment type="similarity">
    <text evidence="1">Belongs to the AccD/PCCB family.</text>
</comment>
<accession>Q4KEZ8</accession>
<sequence length="306" mass="33419">MSNWLVDKLIPSIMRSEVKKSSVPEGLWHKCPSCEAVLYRPELEKTLDVCPKCNHHMRIGARARIDIFLDAEGRAELGADLEPVDRLKFRDGKKYKDRLTAAQKQTGEKDALISMSGTLLGMPVVVSAFEFSFMGGSMGAIVGERFVRAANYALEKRCPMICFSASGGARMQEALISLMQMAKTSAVLARLREEGIPFISVLTDPVYGGVSASLAMLGDVIVAEPKALVGFAGPRVIEQTVREKLPEGFQRSEFLLEHGAIDMIISRQELRPRLGNLLAQLMGLPTPEFVAAPVEPIVVPPAPANL</sequence>
<keyword id="KW-0067">ATP-binding</keyword>
<keyword id="KW-0963">Cytoplasm</keyword>
<keyword id="KW-0275">Fatty acid biosynthesis</keyword>
<keyword id="KW-0276">Fatty acid metabolism</keyword>
<keyword id="KW-0444">Lipid biosynthesis</keyword>
<keyword id="KW-0443">Lipid metabolism</keyword>
<keyword id="KW-0479">Metal-binding</keyword>
<keyword id="KW-0547">Nucleotide-binding</keyword>
<keyword id="KW-0808">Transferase</keyword>
<keyword id="KW-0862">Zinc</keyword>
<keyword id="KW-0863">Zinc-finger</keyword>